<evidence type="ECO:0000250" key="1">
    <source>
        <dbReference type="UniProtKB" id="Q7JRJ1"/>
    </source>
</evidence>
<evidence type="ECO:0000250" key="2">
    <source>
        <dbReference type="UniProtKB" id="Q96JC9"/>
    </source>
</evidence>
<evidence type="ECO:0000255" key="3"/>
<evidence type="ECO:0000256" key="4">
    <source>
        <dbReference type="SAM" id="MobiDB-lite"/>
    </source>
</evidence>
<evidence type="ECO:0000312" key="5">
    <source>
        <dbReference type="EMBL" id="EDW89171.1"/>
    </source>
</evidence>
<accession>B4P1N5</accession>
<protein>
    <recommendedName>
        <fullName evidence="1">Ell-associated factor Eaf</fullName>
    </recommendedName>
</protein>
<organism>
    <name type="scientific">Drosophila yakuba</name>
    <name type="common">Fruit fly</name>
    <dbReference type="NCBI Taxonomy" id="7245"/>
    <lineage>
        <taxon>Eukaryota</taxon>
        <taxon>Metazoa</taxon>
        <taxon>Ecdysozoa</taxon>
        <taxon>Arthropoda</taxon>
        <taxon>Hexapoda</taxon>
        <taxon>Insecta</taxon>
        <taxon>Pterygota</taxon>
        <taxon>Neoptera</taxon>
        <taxon>Endopterygota</taxon>
        <taxon>Diptera</taxon>
        <taxon>Brachycera</taxon>
        <taxon>Muscomorpha</taxon>
        <taxon>Ephydroidea</taxon>
        <taxon>Drosophilidae</taxon>
        <taxon>Drosophila</taxon>
        <taxon>Sophophora</taxon>
    </lineage>
</organism>
<reference evidence="5" key="1">
    <citation type="journal article" date="2007" name="Nature">
        <title>Evolution of genes and genomes on the Drosophila phylogeny.</title>
        <authorList>
            <consortium name="Drosophila 12 genomes consortium"/>
        </authorList>
    </citation>
    <scope>NUCLEOTIDE SEQUENCE [LARGE SCALE GENOMIC DNA]</scope>
    <source>
        <strain evidence="5">Tai18E2 / Tucson 14021-0261.01</strain>
    </source>
</reference>
<sequence>MIMTKQKNSLAERLNIGEEVRELKLGATFNPKNTSTAFHTIKYDFKPASVDTSRMASVDVGSNNQVTVTVPNSESSGVPHTVYKGNQREYAKECLMIYDKETGAITIEKLNHNIQVKKTRSEVTSKSVQLPGQHASVNMGQGQLHSQGANGAGTGQGPISAPGHGSGTAPKMENSTMRISTKTKVSTGSRRNNIIDFKPRNSPMQQSSPSRPVPVHRSPQSAPAWDANNAQQTLPSIPLITDDDDFGLRAALHNSGHANTSGSSTGSATGQTDFGSISSSSHIGKQRQAPPHGHGKRQQMHQRQSPPMAQQQQPSNYGRGYNGGQSHAQQQRQRNSPQQQRPPAYGHGNSMTMDLDSTREQELTSQSVAQAAAALEQQIGGALSASSSSSESDSSDSDSGSDSDDSTEDDRPMEGQQPVYQNQNHQQQQMAQQHLNQLPNLGLGSISPAYGSNHQQQQQQMVPHQQQQKQQSGIYASNGGFPNDLLQNDLQLSSNSSDDDD</sequence>
<dbReference type="EMBL" id="CM000157">
    <property type="protein sequence ID" value="EDW89171.1"/>
    <property type="molecule type" value="Genomic_DNA"/>
</dbReference>
<dbReference type="SMR" id="B4P1N5"/>
<dbReference type="EnsemblMetazoa" id="FBtr0270588">
    <property type="protein sequence ID" value="FBpp0269080"/>
    <property type="gene ID" value="FBgn0241209"/>
</dbReference>
<dbReference type="EnsemblMetazoa" id="XM_002089423.3">
    <property type="protein sequence ID" value="XP_002089459.1"/>
    <property type="gene ID" value="LOC6528413"/>
</dbReference>
<dbReference type="GeneID" id="6528413"/>
<dbReference type="KEGG" id="dya:Dyak_GE24070"/>
<dbReference type="eggNOG" id="KOG4795">
    <property type="taxonomic scope" value="Eukaryota"/>
</dbReference>
<dbReference type="HOGENOM" id="CLU_025755_2_1_1"/>
<dbReference type="OMA" id="SSHMGKQ"/>
<dbReference type="OrthoDB" id="125903at2759"/>
<dbReference type="PhylomeDB" id="B4P1N5"/>
<dbReference type="Proteomes" id="UP000002282">
    <property type="component" value="Chromosome 2L"/>
</dbReference>
<dbReference type="GO" id="GO:0005654">
    <property type="term" value="C:nucleoplasm"/>
    <property type="evidence" value="ECO:0000250"/>
    <property type="project" value="UniProtKB"/>
</dbReference>
<dbReference type="GO" id="GO:0032783">
    <property type="term" value="C:super elongation complex"/>
    <property type="evidence" value="ECO:0007669"/>
    <property type="project" value="EnsemblMetazoa"/>
</dbReference>
<dbReference type="GO" id="GO:0003711">
    <property type="term" value="F:transcription elongation factor activity"/>
    <property type="evidence" value="ECO:0007669"/>
    <property type="project" value="TreeGrafter"/>
</dbReference>
<dbReference type="GO" id="GO:0034605">
    <property type="term" value="P:cellular response to heat"/>
    <property type="evidence" value="ECO:0007669"/>
    <property type="project" value="EnsemblMetazoa"/>
</dbReference>
<dbReference type="GO" id="GO:0045893">
    <property type="term" value="P:positive regulation of DNA-templated transcription"/>
    <property type="evidence" value="ECO:0000250"/>
    <property type="project" value="UniProtKB"/>
</dbReference>
<dbReference type="GO" id="GO:0006368">
    <property type="term" value="P:transcription elongation by RNA polymerase II"/>
    <property type="evidence" value="ECO:0007669"/>
    <property type="project" value="InterPro"/>
</dbReference>
<dbReference type="InterPro" id="IPR027093">
    <property type="entry name" value="EAF_fam"/>
</dbReference>
<dbReference type="InterPro" id="IPR019194">
    <property type="entry name" value="Tscrpt_elong_fac_Eaf_N"/>
</dbReference>
<dbReference type="PANTHER" id="PTHR15970">
    <property type="entry name" value="ELL-ASSOCIATED FACTOR EAF"/>
    <property type="match status" value="1"/>
</dbReference>
<dbReference type="PANTHER" id="PTHR15970:SF2">
    <property type="entry name" value="ELL-ASSOCIATED FACTOR EAF"/>
    <property type="match status" value="1"/>
</dbReference>
<dbReference type="Pfam" id="PF09816">
    <property type="entry name" value="EAF"/>
    <property type="match status" value="1"/>
</dbReference>
<feature type="chain" id="PRO_0000386607" description="Ell-associated factor Eaf">
    <location>
        <begin position="1"/>
        <end position="501"/>
    </location>
</feature>
<feature type="region of interest" description="Disordered" evidence="4">
    <location>
        <begin position="138"/>
        <end position="226"/>
    </location>
</feature>
<feature type="region of interest" description="Disordered" evidence="4">
    <location>
        <begin position="256"/>
        <end position="501"/>
    </location>
</feature>
<feature type="compositionally biased region" description="Polar residues" evidence="4">
    <location>
        <begin position="138"/>
        <end position="149"/>
    </location>
</feature>
<feature type="compositionally biased region" description="Polar residues" evidence="4">
    <location>
        <begin position="173"/>
        <end position="192"/>
    </location>
</feature>
<feature type="compositionally biased region" description="Low complexity" evidence="4">
    <location>
        <begin position="200"/>
        <end position="221"/>
    </location>
</feature>
<feature type="compositionally biased region" description="Low complexity" evidence="4">
    <location>
        <begin position="256"/>
        <end position="270"/>
    </location>
</feature>
<feature type="compositionally biased region" description="Polar residues" evidence="4">
    <location>
        <begin position="271"/>
        <end position="283"/>
    </location>
</feature>
<feature type="compositionally biased region" description="Low complexity" evidence="4">
    <location>
        <begin position="302"/>
        <end position="314"/>
    </location>
</feature>
<feature type="compositionally biased region" description="Low complexity" evidence="4">
    <location>
        <begin position="329"/>
        <end position="343"/>
    </location>
</feature>
<feature type="compositionally biased region" description="Acidic residues" evidence="4">
    <location>
        <begin position="393"/>
        <end position="408"/>
    </location>
</feature>
<feature type="compositionally biased region" description="Low complexity" evidence="4">
    <location>
        <begin position="416"/>
        <end position="437"/>
    </location>
</feature>
<feature type="compositionally biased region" description="Low complexity" evidence="4">
    <location>
        <begin position="455"/>
        <end position="471"/>
    </location>
</feature>
<feature type="compositionally biased region" description="Low complexity" evidence="4">
    <location>
        <begin position="483"/>
        <end position="501"/>
    </location>
</feature>
<feature type="modified residue" description="Phosphoserine" evidence="1">
    <location>
        <position position="202"/>
    </location>
</feature>
<name>EAF_DROYA</name>
<comment type="function">
    <text evidence="1">Promotes transcriptional elongation by Su(Tpl)/ELL. Essential for development (By similarity).</text>
</comment>
<comment type="subcellular location">
    <subcellularLocation>
        <location evidence="2">Nucleus</location>
    </subcellularLocation>
</comment>
<comment type="similarity">
    <text evidence="3">Belongs to the EAF family.</text>
</comment>
<gene>
    <name evidence="1" type="primary">Eaf</name>
    <name type="ORF">GE24070</name>
</gene>
<keyword id="KW-0010">Activator</keyword>
<keyword id="KW-0217">Developmental protein</keyword>
<keyword id="KW-0539">Nucleus</keyword>
<keyword id="KW-0597">Phosphoprotein</keyword>
<keyword id="KW-0804">Transcription</keyword>
<keyword id="KW-0805">Transcription regulation</keyword>
<proteinExistence type="inferred from homology"/>